<accession>C3L798</accession>
<protein>
    <recommendedName>
        <fullName evidence="1">ATP-dependent protease ATPase subunit HslU</fullName>
    </recommendedName>
    <alternativeName>
        <fullName evidence="1">Unfoldase HslU</fullName>
    </alternativeName>
</protein>
<feature type="chain" id="PRO_1000125426" description="ATP-dependent protease ATPase subunit HslU">
    <location>
        <begin position="1"/>
        <end position="463"/>
    </location>
</feature>
<feature type="binding site" evidence="1">
    <location>
        <position position="19"/>
    </location>
    <ligand>
        <name>ATP</name>
        <dbReference type="ChEBI" id="CHEBI:30616"/>
    </ligand>
</feature>
<feature type="binding site" evidence="1">
    <location>
        <begin position="61"/>
        <end position="66"/>
    </location>
    <ligand>
        <name>ATP</name>
        <dbReference type="ChEBI" id="CHEBI:30616"/>
    </ligand>
</feature>
<feature type="binding site" evidence="1">
    <location>
        <position position="277"/>
    </location>
    <ligand>
        <name>ATP</name>
        <dbReference type="ChEBI" id="CHEBI:30616"/>
    </ligand>
</feature>
<feature type="binding site" evidence="1">
    <location>
        <position position="341"/>
    </location>
    <ligand>
        <name>ATP</name>
        <dbReference type="ChEBI" id="CHEBI:30616"/>
    </ligand>
</feature>
<feature type="binding site" evidence="1">
    <location>
        <position position="413"/>
    </location>
    <ligand>
        <name>ATP</name>
        <dbReference type="ChEBI" id="CHEBI:30616"/>
    </ligand>
</feature>
<proteinExistence type="inferred from homology"/>
<organism>
    <name type="scientific">Bacillus anthracis (strain CDC 684 / NRRL 3495)</name>
    <dbReference type="NCBI Taxonomy" id="568206"/>
    <lineage>
        <taxon>Bacteria</taxon>
        <taxon>Bacillati</taxon>
        <taxon>Bacillota</taxon>
        <taxon>Bacilli</taxon>
        <taxon>Bacillales</taxon>
        <taxon>Bacillaceae</taxon>
        <taxon>Bacillus</taxon>
        <taxon>Bacillus cereus group</taxon>
    </lineage>
</organism>
<reference key="1">
    <citation type="submission" date="2008-10" db="EMBL/GenBank/DDBJ databases">
        <title>Genome sequence of Bacillus anthracis str. CDC 684.</title>
        <authorList>
            <person name="Dodson R.J."/>
            <person name="Munk A.C."/>
            <person name="Brettin T."/>
            <person name="Bruce D."/>
            <person name="Detter C."/>
            <person name="Tapia R."/>
            <person name="Han C."/>
            <person name="Sutton G."/>
            <person name="Sims D."/>
        </authorList>
    </citation>
    <scope>NUCLEOTIDE SEQUENCE [LARGE SCALE GENOMIC DNA]</scope>
    <source>
        <strain>CDC 684 / NRRL 3495</strain>
    </source>
</reference>
<sequence>MHLHFTPRQIVEKLDQYIIGQKDAKKAVAVALRNRYRRSKLAENLRDEIAPKNILMIGPTGVGKTEVARRMAKLVGAPFIKVEATKFTEVGYVGRDVESMVRDLVETSVRIVKEEMVVKVQDKAEEQANQRLVEILVPSPEKQSGFKNPLEMLFGGTQNSNQTTDSQEDVEIEKKRQDVERKLAAGLLEDEIVSIEVTEQQSSMFDMLQGTGMEQMGMNFQDALGSFMPKKTKKRKLSVKEARKVLTNEEAQRLIDMDEVTQEAVYRAEQLGIIFIDEIDKIAGKQSNSVDVSREGVQRDILPIVEGSNVATKYGSVKTDYILFVAAGAFHMSKPSDLIPELQGRFPIRVELTKLSTDDFVKILIEPDNALIKQYMALLATEGIEIEFSDEAIRKIAEIAYQVNQDTDNIGARRLHTIMEKLLEDLSFEASEITLEKITITPQYVEEKLATIAKNKDVSQFIL</sequence>
<dbReference type="EMBL" id="CP001215">
    <property type="protein sequence ID" value="ACP15684.1"/>
    <property type="molecule type" value="Genomic_DNA"/>
</dbReference>
<dbReference type="RefSeq" id="WP_000550088.1">
    <property type="nucleotide sequence ID" value="NC_012581.1"/>
</dbReference>
<dbReference type="SMR" id="C3L798"/>
<dbReference type="GeneID" id="45023657"/>
<dbReference type="KEGG" id="bah:BAMEG_0665"/>
<dbReference type="HOGENOM" id="CLU_033123_0_0_9"/>
<dbReference type="GO" id="GO:0009376">
    <property type="term" value="C:HslUV protease complex"/>
    <property type="evidence" value="ECO:0007669"/>
    <property type="project" value="UniProtKB-UniRule"/>
</dbReference>
<dbReference type="GO" id="GO:0005524">
    <property type="term" value="F:ATP binding"/>
    <property type="evidence" value="ECO:0007669"/>
    <property type="project" value="UniProtKB-UniRule"/>
</dbReference>
<dbReference type="GO" id="GO:0016887">
    <property type="term" value="F:ATP hydrolysis activity"/>
    <property type="evidence" value="ECO:0007669"/>
    <property type="project" value="InterPro"/>
</dbReference>
<dbReference type="GO" id="GO:0008233">
    <property type="term" value="F:peptidase activity"/>
    <property type="evidence" value="ECO:0007669"/>
    <property type="project" value="InterPro"/>
</dbReference>
<dbReference type="GO" id="GO:0036402">
    <property type="term" value="F:proteasome-activating activity"/>
    <property type="evidence" value="ECO:0007669"/>
    <property type="project" value="UniProtKB-UniRule"/>
</dbReference>
<dbReference type="GO" id="GO:0043335">
    <property type="term" value="P:protein unfolding"/>
    <property type="evidence" value="ECO:0007669"/>
    <property type="project" value="UniProtKB-UniRule"/>
</dbReference>
<dbReference type="GO" id="GO:0051603">
    <property type="term" value="P:proteolysis involved in protein catabolic process"/>
    <property type="evidence" value="ECO:0007669"/>
    <property type="project" value="TreeGrafter"/>
</dbReference>
<dbReference type="CDD" id="cd19498">
    <property type="entry name" value="RecA-like_HslU"/>
    <property type="match status" value="1"/>
</dbReference>
<dbReference type="FunFam" id="3.40.50.300:FF:000220">
    <property type="entry name" value="ATP-dependent protease ATPase subunit HslU"/>
    <property type="match status" value="1"/>
</dbReference>
<dbReference type="Gene3D" id="1.10.8.60">
    <property type="match status" value="1"/>
</dbReference>
<dbReference type="Gene3D" id="1.10.8.10">
    <property type="entry name" value="DNA helicase RuvA subunit, C-terminal domain"/>
    <property type="match status" value="2"/>
</dbReference>
<dbReference type="Gene3D" id="3.40.50.300">
    <property type="entry name" value="P-loop containing nucleotide triphosphate hydrolases"/>
    <property type="match status" value="1"/>
</dbReference>
<dbReference type="HAMAP" id="MF_00249">
    <property type="entry name" value="HslU"/>
    <property type="match status" value="1"/>
</dbReference>
<dbReference type="InterPro" id="IPR003593">
    <property type="entry name" value="AAA+_ATPase"/>
</dbReference>
<dbReference type="InterPro" id="IPR050052">
    <property type="entry name" value="ATP-dep_Clp_protease_ClpX"/>
</dbReference>
<dbReference type="InterPro" id="IPR003959">
    <property type="entry name" value="ATPase_AAA_core"/>
</dbReference>
<dbReference type="InterPro" id="IPR019489">
    <property type="entry name" value="Clp_ATPase_C"/>
</dbReference>
<dbReference type="InterPro" id="IPR004491">
    <property type="entry name" value="HslU"/>
</dbReference>
<dbReference type="InterPro" id="IPR027417">
    <property type="entry name" value="P-loop_NTPase"/>
</dbReference>
<dbReference type="NCBIfam" id="TIGR00390">
    <property type="entry name" value="hslU"/>
    <property type="match status" value="1"/>
</dbReference>
<dbReference type="NCBIfam" id="NF003544">
    <property type="entry name" value="PRK05201.1"/>
    <property type="match status" value="1"/>
</dbReference>
<dbReference type="PANTHER" id="PTHR48102">
    <property type="entry name" value="ATP-DEPENDENT CLP PROTEASE ATP-BINDING SUBUNIT CLPX-LIKE, MITOCHONDRIAL-RELATED"/>
    <property type="match status" value="1"/>
</dbReference>
<dbReference type="PANTHER" id="PTHR48102:SF3">
    <property type="entry name" value="ATP-DEPENDENT PROTEASE ATPASE SUBUNIT HSLU"/>
    <property type="match status" value="1"/>
</dbReference>
<dbReference type="Pfam" id="PF00004">
    <property type="entry name" value="AAA"/>
    <property type="match status" value="1"/>
</dbReference>
<dbReference type="Pfam" id="PF07724">
    <property type="entry name" value="AAA_2"/>
    <property type="match status" value="1"/>
</dbReference>
<dbReference type="Pfam" id="PF10431">
    <property type="entry name" value="ClpB_D2-small"/>
    <property type="match status" value="1"/>
</dbReference>
<dbReference type="SMART" id="SM00382">
    <property type="entry name" value="AAA"/>
    <property type="match status" value="1"/>
</dbReference>
<dbReference type="SMART" id="SM01086">
    <property type="entry name" value="ClpB_D2-small"/>
    <property type="match status" value="1"/>
</dbReference>
<dbReference type="SUPFAM" id="SSF52540">
    <property type="entry name" value="P-loop containing nucleoside triphosphate hydrolases"/>
    <property type="match status" value="1"/>
</dbReference>
<evidence type="ECO:0000255" key="1">
    <source>
        <dbReference type="HAMAP-Rule" id="MF_00249"/>
    </source>
</evidence>
<gene>
    <name evidence="1" type="primary">hslU</name>
    <name type="ordered locus">BAMEG_0665</name>
</gene>
<comment type="function">
    <text evidence="1">ATPase subunit of a proteasome-like degradation complex; this subunit has chaperone activity. The binding of ATP and its subsequent hydrolysis by HslU are essential for unfolding of protein substrates subsequently hydrolyzed by HslV. HslU recognizes the N-terminal part of its protein substrates and unfolds these before they are guided to HslV for hydrolysis.</text>
</comment>
<comment type="subunit">
    <text evidence="1">A double ring-shaped homohexamer of HslV is capped on each side by a ring-shaped HslU homohexamer. The assembly of the HslU/HslV complex is dependent on binding of ATP.</text>
</comment>
<comment type="subcellular location">
    <subcellularLocation>
        <location evidence="1">Cytoplasm</location>
    </subcellularLocation>
</comment>
<comment type="similarity">
    <text evidence="1">Belongs to the ClpX chaperone family. HslU subfamily.</text>
</comment>
<keyword id="KW-0067">ATP-binding</keyword>
<keyword id="KW-0143">Chaperone</keyword>
<keyword id="KW-0963">Cytoplasm</keyword>
<keyword id="KW-0547">Nucleotide-binding</keyword>
<keyword id="KW-0346">Stress response</keyword>
<name>HSLU_BACAC</name>